<accession>A6QQ60</accession>
<reference key="1">
    <citation type="submission" date="2007-07" db="EMBL/GenBank/DDBJ databases">
        <authorList>
            <consortium name="NIH - Mammalian Gene Collection (MGC) project"/>
        </authorList>
    </citation>
    <scope>NUCLEOTIDE SEQUENCE [LARGE SCALE MRNA]</scope>
    <source>
        <strain>Hereford</strain>
        <tissue>Testis</tissue>
    </source>
</reference>
<feature type="chain" id="PRO_0000305169" description="O(6)-methylguanine-induced apoptosis 2">
    <location>
        <begin position="1"/>
        <end position="335"/>
    </location>
</feature>
<feature type="repeat" description="STPGR 1">
    <location>
        <begin position="68"/>
        <end position="75"/>
    </location>
</feature>
<feature type="repeat" description="STPGR 2">
    <location>
        <begin position="110"/>
        <end position="118"/>
    </location>
</feature>
<feature type="repeat" description="STPGR 3">
    <location>
        <begin position="149"/>
        <end position="156"/>
    </location>
</feature>
<feature type="repeat" description="STPGR 4">
    <location>
        <begin position="188"/>
        <end position="215"/>
    </location>
</feature>
<feature type="repeat" description="STPGR 5">
    <location>
        <begin position="226"/>
        <end position="255"/>
    </location>
</feature>
<feature type="repeat" description="STPGR 6">
    <location>
        <begin position="267"/>
        <end position="284"/>
    </location>
</feature>
<feature type="repeat" description="STPGR 7">
    <location>
        <begin position="308"/>
        <end position="317"/>
    </location>
</feature>
<feature type="region of interest" description="Disordered" evidence="3">
    <location>
        <begin position="1"/>
        <end position="20"/>
    </location>
</feature>
<feature type="compositionally biased region" description="Basic and acidic residues" evidence="3">
    <location>
        <begin position="1"/>
        <end position="11"/>
    </location>
</feature>
<feature type="modified residue" description="Phosphotyrosine" evidence="2">
    <location>
        <position position="73"/>
    </location>
</feature>
<sequence length="335" mass="37104">MDNSTQKDQHSGKKYSRKANKVQKGFTAAYPTQSSIPYKYQPLIIPESEKKGFNSQAKRFYHKQDDIPGPGFYNVIHQSPVFDSVSLSKKGTCTFPSMCARLDTIVSKFPAANAYTIPSRLVSKKDFSNSCSSMFQLPSYEKVLKFETPAPNQYNASDSCCKQANNVCARAGFVSKTQRGLFTVSKTGPAPGHYDVNESLVKQSPKILMSCFKSKTDRGLKLTSTGPGPGYYNPNGHPKVQKKTLIPRNPILNFSAQPLPLPPKPPLPGPGQYEIVDYTGPRKHFISSASFVSNTRRWTAGPSQPGMPGPATYRPEFPGKQSFLYNEDNKWIPVL</sequence>
<name>STPG1_BOVIN</name>
<gene>
    <name type="primary">STPG1</name>
</gene>
<keyword id="KW-0053">Apoptosis</keyword>
<keyword id="KW-0963">Cytoplasm</keyword>
<keyword id="KW-0539">Nucleus</keyword>
<keyword id="KW-0597">Phosphoprotein</keyword>
<keyword id="KW-1185">Reference proteome</keyword>
<keyword id="KW-0677">Repeat</keyword>
<proteinExistence type="evidence at transcript level"/>
<evidence type="ECO:0000250" key="1"/>
<evidence type="ECO:0000250" key="2">
    <source>
        <dbReference type="UniProtKB" id="Q5TH74"/>
    </source>
</evidence>
<evidence type="ECO:0000256" key="3">
    <source>
        <dbReference type="SAM" id="MobiDB-lite"/>
    </source>
</evidence>
<evidence type="ECO:0000305" key="4"/>
<protein>
    <recommendedName>
        <fullName>O(6)-methylguanine-induced apoptosis 2</fullName>
        <shortName>MAPO2</shortName>
    </recommendedName>
    <alternativeName>
        <fullName>Sperm-tail PG-rich repeat-containing protein 1</fullName>
    </alternativeName>
</protein>
<organism>
    <name type="scientific">Bos taurus</name>
    <name type="common">Bovine</name>
    <dbReference type="NCBI Taxonomy" id="9913"/>
    <lineage>
        <taxon>Eukaryota</taxon>
        <taxon>Metazoa</taxon>
        <taxon>Chordata</taxon>
        <taxon>Craniata</taxon>
        <taxon>Vertebrata</taxon>
        <taxon>Euteleostomi</taxon>
        <taxon>Mammalia</taxon>
        <taxon>Eutheria</taxon>
        <taxon>Laurasiatheria</taxon>
        <taxon>Artiodactyla</taxon>
        <taxon>Ruminantia</taxon>
        <taxon>Pecora</taxon>
        <taxon>Bovidae</taxon>
        <taxon>Bovinae</taxon>
        <taxon>Bos</taxon>
    </lineage>
</organism>
<comment type="function">
    <text evidence="1">May positively contribute to the induction of apoptosis triggered by O(6)-methylguanine.</text>
</comment>
<comment type="subcellular location">
    <subcellularLocation>
        <location evidence="1">Cytoplasm</location>
    </subcellularLocation>
    <subcellularLocation>
        <location evidence="1">Nucleus</location>
    </subcellularLocation>
</comment>
<comment type="similarity">
    <text evidence="4">Belongs to the STPG1 family.</text>
</comment>
<dbReference type="EMBL" id="BC149661">
    <property type="protein sequence ID" value="AAI49662.1"/>
    <property type="molecule type" value="mRNA"/>
</dbReference>
<dbReference type="RefSeq" id="NP_001095774.1">
    <property type="nucleotide sequence ID" value="NM_001102304.2"/>
</dbReference>
<dbReference type="RefSeq" id="XP_005203313.1">
    <property type="nucleotide sequence ID" value="XM_005203256.5"/>
</dbReference>
<dbReference type="RefSeq" id="XP_015316044.1">
    <property type="nucleotide sequence ID" value="XM_015460558.1"/>
</dbReference>
<dbReference type="RefSeq" id="XP_024833798.1">
    <property type="nucleotide sequence ID" value="XM_024978030.2"/>
</dbReference>
<dbReference type="RefSeq" id="XP_024833801.1">
    <property type="nucleotide sequence ID" value="XM_024978033.2"/>
</dbReference>
<dbReference type="RefSeq" id="XP_059732806.1">
    <property type="nucleotide sequence ID" value="XM_059876823.1"/>
</dbReference>
<dbReference type="RefSeq" id="XP_059732811.1">
    <property type="nucleotide sequence ID" value="XM_059876828.1"/>
</dbReference>
<dbReference type="RefSeq" id="XP_059732817.1">
    <property type="nucleotide sequence ID" value="XM_059876834.1"/>
</dbReference>
<dbReference type="FunCoup" id="A6QQ60">
    <property type="interactions" value="230"/>
</dbReference>
<dbReference type="STRING" id="9913.ENSBTAP00000073904"/>
<dbReference type="PaxDb" id="9913-ENSBTAP00000013576"/>
<dbReference type="Ensembl" id="ENSBTAT00000013576.6">
    <property type="protein sequence ID" value="ENSBTAP00000013576.5"/>
    <property type="gene ID" value="ENSBTAG00000010278.7"/>
</dbReference>
<dbReference type="GeneID" id="616738"/>
<dbReference type="KEGG" id="bta:616738"/>
<dbReference type="CTD" id="90529"/>
<dbReference type="VEuPathDB" id="HostDB:ENSBTAG00000010278"/>
<dbReference type="VGNC" id="VGNC:35416">
    <property type="gene designation" value="STPG1"/>
</dbReference>
<dbReference type="eggNOG" id="ENOG502R2KG">
    <property type="taxonomic scope" value="Eukaryota"/>
</dbReference>
<dbReference type="GeneTree" id="ENSGT00390000011598"/>
<dbReference type="HOGENOM" id="CLU_071847_0_0_1"/>
<dbReference type="InParanoid" id="A6QQ60"/>
<dbReference type="OMA" id="GQYENPI"/>
<dbReference type="OrthoDB" id="186871at2759"/>
<dbReference type="TreeFam" id="TF328937"/>
<dbReference type="Proteomes" id="UP000009136">
    <property type="component" value="Chromosome 2"/>
</dbReference>
<dbReference type="Bgee" id="ENSBTAG00000010278">
    <property type="expression patterns" value="Expressed in spermatid and 73 other cell types or tissues"/>
</dbReference>
<dbReference type="GO" id="GO:0005739">
    <property type="term" value="C:mitochondrion"/>
    <property type="evidence" value="ECO:0007669"/>
    <property type="project" value="GOC"/>
</dbReference>
<dbReference type="GO" id="GO:0005634">
    <property type="term" value="C:nucleus"/>
    <property type="evidence" value="ECO:0007669"/>
    <property type="project" value="UniProtKB-SubCell"/>
</dbReference>
<dbReference type="GO" id="GO:0043065">
    <property type="term" value="P:positive regulation of apoptotic process"/>
    <property type="evidence" value="ECO:0007669"/>
    <property type="project" value="Ensembl"/>
</dbReference>
<dbReference type="GO" id="GO:1902110">
    <property type="term" value="P:positive regulation of mitochondrial membrane permeability involved in apoptotic process"/>
    <property type="evidence" value="ECO:0000318"/>
    <property type="project" value="GO_Central"/>
</dbReference>
<dbReference type="InterPro" id="IPR010736">
    <property type="entry name" value="SHIPPO-rpt"/>
</dbReference>
<dbReference type="PANTHER" id="PTHR35678">
    <property type="entry name" value="PROTEIN STPG4"/>
    <property type="match status" value="1"/>
</dbReference>
<dbReference type="PANTHER" id="PTHR35678:SF1">
    <property type="entry name" value="PROTEIN STPG4"/>
    <property type="match status" value="1"/>
</dbReference>
<dbReference type="Pfam" id="PF07004">
    <property type="entry name" value="SHIPPO-rpt"/>
    <property type="match status" value="3"/>
</dbReference>